<dbReference type="EC" id="2.7.11.1"/>
<dbReference type="EMBL" id="AL123456">
    <property type="protein sequence ID" value="CCP42736.1"/>
    <property type="molecule type" value="Genomic_DNA"/>
</dbReference>
<dbReference type="PIR" id="D70699">
    <property type="entry name" value="D70699"/>
</dbReference>
<dbReference type="RefSeq" id="NP_214528.1">
    <property type="nucleotide sequence ID" value="NC_000962.3"/>
</dbReference>
<dbReference type="RefSeq" id="WP_003400356.1">
    <property type="nucleotide sequence ID" value="NZ_NVQJ01000005.1"/>
</dbReference>
<dbReference type="PDB" id="1MRU">
    <property type="method" value="X-ray"/>
    <property type="resolution" value="3.00 A"/>
    <property type="chains" value="A/B=1-308"/>
</dbReference>
<dbReference type="PDB" id="1O6Y">
    <property type="method" value="X-ray"/>
    <property type="resolution" value="2.20 A"/>
    <property type="chains" value="A=1-279"/>
</dbReference>
<dbReference type="PDB" id="2FUM">
    <property type="method" value="X-ray"/>
    <property type="resolution" value="2.89 A"/>
    <property type="chains" value="A/B/C/D=1-279"/>
</dbReference>
<dbReference type="PDB" id="2KUD">
    <property type="method" value="NMR"/>
    <property type="chains" value="A=355-491"/>
</dbReference>
<dbReference type="PDB" id="2KUE">
    <property type="method" value="NMR"/>
    <property type="chains" value="A=423-557"/>
</dbReference>
<dbReference type="PDB" id="2KUF">
    <property type="method" value="NMR"/>
    <property type="chains" value="A=491-626"/>
</dbReference>
<dbReference type="PDB" id="2KUI">
    <property type="method" value="NMR"/>
    <property type="chains" value="A=355-626"/>
</dbReference>
<dbReference type="PDB" id="3F61">
    <property type="method" value="X-ray"/>
    <property type="resolution" value="1.80 A"/>
    <property type="chains" value="A=1-308"/>
</dbReference>
<dbReference type="PDB" id="3F69">
    <property type="method" value="X-ray"/>
    <property type="resolution" value="2.80 A"/>
    <property type="chains" value="A/B=1-308"/>
</dbReference>
<dbReference type="PDB" id="3ORI">
    <property type="method" value="X-ray"/>
    <property type="resolution" value="2.00 A"/>
    <property type="chains" value="A/B/C/D=1-308"/>
</dbReference>
<dbReference type="PDB" id="3ORK">
    <property type="method" value="X-ray"/>
    <property type="resolution" value="1.60 A"/>
    <property type="chains" value="A=1-308"/>
</dbReference>
<dbReference type="PDB" id="3ORL">
    <property type="method" value="X-ray"/>
    <property type="resolution" value="2.90 A"/>
    <property type="chains" value="A=1-308"/>
</dbReference>
<dbReference type="PDB" id="3ORM">
    <property type="method" value="X-ray"/>
    <property type="resolution" value="2.50 A"/>
    <property type="chains" value="A=1-308"/>
</dbReference>
<dbReference type="PDB" id="3ORO">
    <property type="method" value="X-ray"/>
    <property type="resolution" value="1.90 A"/>
    <property type="chains" value="A=1-308"/>
</dbReference>
<dbReference type="PDB" id="3ORP">
    <property type="method" value="X-ray"/>
    <property type="resolution" value="2.10 A"/>
    <property type="chains" value="A=1-308"/>
</dbReference>
<dbReference type="PDB" id="3ORT">
    <property type="method" value="X-ray"/>
    <property type="resolution" value="1.90 A"/>
    <property type="chains" value="A=1-308"/>
</dbReference>
<dbReference type="PDB" id="3OUV">
    <property type="method" value="X-ray"/>
    <property type="resolution" value="2.00 A"/>
    <property type="chains" value="A=489-558"/>
</dbReference>
<dbReference type="PDB" id="5E0Y">
    <property type="method" value="X-ray"/>
    <property type="resolution" value="2.00 A"/>
    <property type="chains" value="A=558-626"/>
</dbReference>
<dbReference type="PDB" id="5E0Z">
    <property type="method" value="X-ray"/>
    <property type="resolution" value="2.00 A"/>
    <property type="chains" value="A=491-626"/>
</dbReference>
<dbReference type="PDB" id="5E10">
    <property type="method" value="X-ray"/>
    <property type="resolution" value="1.80 A"/>
    <property type="chains" value="A=360-491"/>
</dbReference>
<dbReference type="PDB" id="5E12">
    <property type="method" value="X-ray"/>
    <property type="resolution" value="2.21 A"/>
    <property type="chains" value="A/B=423-626"/>
</dbReference>
<dbReference type="PDB" id="5U94">
    <property type="method" value="X-ray"/>
    <property type="resolution" value="2.20 A"/>
    <property type="chains" value="A=1-280"/>
</dbReference>
<dbReference type="PDB" id="6B2P">
    <property type="method" value="X-ray"/>
    <property type="resolution" value="3.01 A"/>
    <property type="chains" value="A=1-279"/>
</dbReference>
<dbReference type="PDB" id="6I2P">
    <property type="method" value="X-ray"/>
    <property type="resolution" value="2.37 A"/>
    <property type="chains" value="A/B=1-279"/>
</dbReference>
<dbReference type="PDBsum" id="1MRU"/>
<dbReference type="PDBsum" id="1O6Y"/>
<dbReference type="PDBsum" id="2FUM"/>
<dbReference type="PDBsum" id="2KUD"/>
<dbReference type="PDBsum" id="2KUE"/>
<dbReference type="PDBsum" id="2KUF"/>
<dbReference type="PDBsum" id="2KUI"/>
<dbReference type="PDBsum" id="3F61"/>
<dbReference type="PDBsum" id="3F69"/>
<dbReference type="PDBsum" id="3ORI"/>
<dbReference type="PDBsum" id="3ORK"/>
<dbReference type="PDBsum" id="3ORL"/>
<dbReference type="PDBsum" id="3ORM"/>
<dbReference type="PDBsum" id="3ORO"/>
<dbReference type="PDBsum" id="3ORP"/>
<dbReference type="PDBsum" id="3ORT"/>
<dbReference type="PDBsum" id="3OUV"/>
<dbReference type="PDBsum" id="5E0Y"/>
<dbReference type="PDBsum" id="5E0Z"/>
<dbReference type="PDBsum" id="5E10"/>
<dbReference type="PDBsum" id="5E12"/>
<dbReference type="PDBsum" id="5U94"/>
<dbReference type="PDBsum" id="6B2P"/>
<dbReference type="PDBsum" id="6I2P"/>
<dbReference type="SMR" id="P9WI81"/>
<dbReference type="FunCoup" id="P9WI81">
    <property type="interactions" value="2"/>
</dbReference>
<dbReference type="IntAct" id="P9WI81">
    <property type="interactions" value="4"/>
</dbReference>
<dbReference type="MINT" id="P9WI81"/>
<dbReference type="STRING" id="83332.Rv0014c"/>
<dbReference type="BindingDB" id="P9WI81"/>
<dbReference type="ChEMBL" id="CHEMBL1908385"/>
<dbReference type="DrugBank" id="DB02930">
    <property type="generic name" value="Adenosine 5'-[gamma-thio]triphosphate"/>
</dbReference>
<dbReference type="DrugBank" id="DB03909">
    <property type="generic name" value="Adenosine-5'-[Beta, Gamma-Methylene]Triphosphate"/>
</dbReference>
<dbReference type="DrugBank" id="DB12010">
    <property type="generic name" value="Fostamatinib"/>
</dbReference>
<dbReference type="DrugCentral" id="P9WI81"/>
<dbReference type="iPTMnet" id="P9WI81"/>
<dbReference type="PaxDb" id="83332-Rv0014c"/>
<dbReference type="GeneID" id="45423973"/>
<dbReference type="GeneID" id="887072"/>
<dbReference type="KEGG" id="mtu:Rv0014c"/>
<dbReference type="KEGG" id="mtv:RVBD_0014c"/>
<dbReference type="TubercuList" id="Rv0014c"/>
<dbReference type="eggNOG" id="COG0515">
    <property type="taxonomic scope" value="Bacteria"/>
</dbReference>
<dbReference type="eggNOG" id="COG2815">
    <property type="taxonomic scope" value="Bacteria"/>
</dbReference>
<dbReference type="InParanoid" id="P9WI81"/>
<dbReference type="OrthoDB" id="9762169at2"/>
<dbReference type="PhylomeDB" id="P9WI81"/>
<dbReference type="EvolutionaryTrace" id="P9WI81"/>
<dbReference type="PRO" id="PR:P9WI81"/>
<dbReference type="Proteomes" id="UP000001584">
    <property type="component" value="Chromosome"/>
</dbReference>
<dbReference type="GO" id="GO:0009274">
    <property type="term" value="C:peptidoglycan-based cell wall"/>
    <property type="evidence" value="ECO:0007005"/>
    <property type="project" value="MTBBASE"/>
</dbReference>
<dbReference type="GO" id="GO:0005886">
    <property type="term" value="C:plasma membrane"/>
    <property type="evidence" value="ECO:0007669"/>
    <property type="project" value="UniProtKB-SubCell"/>
</dbReference>
<dbReference type="GO" id="GO:0010698">
    <property type="term" value="F:acetyltransferase activator activity"/>
    <property type="evidence" value="ECO:0000314"/>
    <property type="project" value="UniProtKB"/>
</dbReference>
<dbReference type="GO" id="GO:0005524">
    <property type="term" value="F:ATP binding"/>
    <property type="evidence" value="ECO:0007669"/>
    <property type="project" value="UniProtKB-KW"/>
</dbReference>
<dbReference type="GO" id="GO:0042802">
    <property type="term" value="F:identical protein binding"/>
    <property type="evidence" value="ECO:0000353"/>
    <property type="project" value="IntAct"/>
</dbReference>
<dbReference type="GO" id="GO:0030145">
    <property type="term" value="F:manganese ion binding"/>
    <property type="evidence" value="ECO:0000314"/>
    <property type="project" value="MTBBASE"/>
</dbReference>
<dbReference type="GO" id="GO:0004672">
    <property type="term" value="F:protein kinase activity"/>
    <property type="evidence" value="ECO:0000314"/>
    <property type="project" value="MTBBASE"/>
</dbReference>
<dbReference type="GO" id="GO:0106310">
    <property type="term" value="F:protein serine kinase activity"/>
    <property type="evidence" value="ECO:0007669"/>
    <property type="project" value="RHEA"/>
</dbReference>
<dbReference type="GO" id="GO:0004674">
    <property type="term" value="F:protein serine/threonine kinase activity"/>
    <property type="evidence" value="ECO:0000314"/>
    <property type="project" value="MTBBASE"/>
</dbReference>
<dbReference type="GO" id="GO:0045717">
    <property type="term" value="P:negative regulation of fatty acid biosynthetic process"/>
    <property type="evidence" value="ECO:0000314"/>
    <property type="project" value="MTBBASE"/>
</dbReference>
<dbReference type="GO" id="GO:0045967">
    <property type="term" value="P:negative regulation of growth rate"/>
    <property type="evidence" value="ECO:0000315"/>
    <property type="project" value="UniProtKB"/>
</dbReference>
<dbReference type="GO" id="GO:0009252">
    <property type="term" value="P:peptidoglycan biosynthetic process"/>
    <property type="evidence" value="ECO:0000314"/>
    <property type="project" value="UniProtKB"/>
</dbReference>
<dbReference type="GO" id="GO:0008360">
    <property type="term" value="P:regulation of cell shape"/>
    <property type="evidence" value="ECO:0000315"/>
    <property type="project" value="MTBBASE"/>
</dbReference>
<dbReference type="GO" id="GO:0006355">
    <property type="term" value="P:regulation of DNA-templated transcription"/>
    <property type="evidence" value="ECO:0000314"/>
    <property type="project" value="UniProtKB"/>
</dbReference>
<dbReference type="CDD" id="cd06577">
    <property type="entry name" value="PASTA_pknB"/>
    <property type="match status" value="4"/>
</dbReference>
<dbReference type="CDD" id="cd14014">
    <property type="entry name" value="STKc_PknB_like"/>
    <property type="match status" value="1"/>
</dbReference>
<dbReference type="FunFam" id="1.10.510.10:FF:000021">
    <property type="entry name" value="Serine/threonine protein kinase"/>
    <property type="match status" value="1"/>
</dbReference>
<dbReference type="FunFam" id="3.30.200.20:FF:000035">
    <property type="entry name" value="Serine/threonine protein kinase Stk1"/>
    <property type="match status" value="1"/>
</dbReference>
<dbReference type="Gene3D" id="3.30.10.20">
    <property type="match status" value="4"/>
</dbReference>
<dbReference type="Gene3D" id="3.30.200.20">
    <property type="entry name" value="Phosphorylase Kinase, domain 1"/>
    <property type="match status" value="1"/>
</dbReference>
<dbReference type="Gene3D" id="1.10.510.10">
    <property type="entry name" value="Transferase(Phosphotransferase) domain 1"/>
    <property type="match status" value="1"/>
</dbReference>
<dbReference type="InterPro" id="IPR011009">
    <property type="entry name" value="Kinase-like_dom_sf"/>
</dbReference>
<dbReference type="InterPro" id="IPR005543">
    <property type="entry name" value="PASTA_dom"/>
</dbReference>
<dbReference type="InterPro" id="IPR000719">
    <property type="entry name" value="Prot_kinase_dom"/>
</dbReference>
<dbReference type="InterPro" id="IPR017441">
    <property type="entry name" value="Protein_kinase_ATP_BS"/>
</dbReference>
<dbReference type="InterPro" id="IPR008271">
    <property type="entry name" value="Ser/Thr_kinase_AS"/>
</dbReference>
<dbReference type="NCBIfam" id="NF033483">
    <property type="entry name" value="PknB_PASTA_kin"/>
    <property type="match status" value="1"/>
</dbReference>
<dbReference type="PANTHER" id="PTHR43289">
    <property type="entry name" value="MITOGEN-ACTIVATED PROTEIN KINASE KINASE KINASE 20-RELATED"/>
    <property type="match status" value="1"/>
</dbReference>
<dbReference type="PANTHER" id="PTHR43289:SF6">
    <property type="entry name" value="SERINE_THREONINE-PROTEIN KINASE NEKL-3"/>
    <property type="match status" value="1"/>
</dbReference>
<dbReference type="Pfam" id="PF03793">
    <property type="entry name" value="PASTA"/>
    <property type="match status" value="4"/>
</dbReference>
<dbReference type="Pfam" id="PF00069">
    <property type="entry name" value="Pkinase"/>
    <property type="match status" value="1"/>
</dbReference>
<dbReference type="SMART" id="SM00740">
    <property type="entry name" value="PASTA"/>
    <property type="match status" value="4"/>
</dbReference>
<dbReference type="SMART" id="SM00220">
    <property type="entry name" value="S_TKc"/>
    <property type="match status" value="1"/>
</dbReference>
<dbReference type="SUPFAM" id="SSF56112">
    <property type="entry name" value="Protein kinase-like (PK-like)"/>
    <property type="match status" value="1"/>
</dbReference>
<dbReference type="PROSITE" id="PS51178">
    <property type="entry name" value="PASTA"/>
    <property type="match status" value="4"/>
</dbReference>
<dbReference type="PROSITE" id="PS00107">
    <property type="entry name" value="PROTEIN_KINASE_ATP"/>
    <property type="match status" value="1"/>
</dbReference>
<dbReference type="PROSITE" id="PS50011">
    <property type="entry name" value="PROTEIN_KINASE_DOM"/>
    <property type="match status" value="1"/>
</dbReference>
<dbReference type="PROSITE" id="PS00108">
    <property type="entry name" value="PROTEIN_KINASE_ST"/>
    <property type="match status" value="1"/>
</dbReference>
<accession>P9WI81</accession>
<accession>L0T5F6</accession>
<accession>P0A5S4</accession>
<accession>P71584</accession>
<organism>
    <name type="scientific">Mycobacterium tuberculosis (strain ATCC 25618 / H37Rv)</name>
    <dbReference type="NCBI Taxonomy" id="83332"/>
    <lineage>
        <taxon>Bacteria</taxon>
        <taxon>Bacillati</taxon>
        <taxon>Actinomycetota</taxon>
        <taxon>Actinomycetes</taxon>
        <taxon>Mycobacteriales</taxon>
        <taxon>Mycobacteriaceae</taxon>
        <taxon>Mycobacterium</taxon>
        <taxon>Mycobacterium tuberculosis complex</taxon>
    </lineage>
</organism>
<gene>
    <name type="primary">pknB</name>
    <name type="ordered locus">Rv0014c</name>
    <name type="ORF">MTCY10H4.14c</name>
</gene>
<reference key="1">
    <citation type="journal article" date="1998" name="Nature">
        <title>Deciphering the biology of Mycobacterium tuberculosis from the complete genome sequence.</title>
        <authorList>
            <person name="Cole S.T."/>
            <person name="Brosch R."/>
            <person name="Parkhill J."/>
            <person name="Garnier T."/>
            <person name="Churcher C.M."/>
            <person name="Harris D.E."/>
            <person name="Gordon S.V."/>
            <person name="Eiglmeier K."/>
            <person name="Gas S."/>
            <person name="Barry C.E. III"/>
            <person name="Tekaia F."/>
            <person name="Badcock K."/>
            <person name="Basham D."/>
            <person name="Brown D."/>
            <person name="Chillingworth T."/>
            <person name="Connor R."/>
            <person name="Davies R.M."/>
            <person name="Devlin K."/>
            <person name="Feltwell T."/>
            <person name="Gentles S."/>
            <person name="Hamlin N."/>
            <person name="Holroyd S."/>
            <person name="Hornsby T."/>
            <person name="Jagels K."/>
            <person name="Krogh A."/>
            <person name="McLean J."/>
            <person name="Moule S."/>
            <person name="Murphy L.D."/>
            <person name="Oliver S."/>
            <person name="Osborne J."/>
            <person name="Quail M.A."/>
            <person name="Rajandream M.A."/>
            <person name="Rogers J."/>
            <person name="Rutter S."/>
            <person name="Seeger K."/>
            <person name="Skelton S."/>
            <person name="Squares S."/>
            <person name="Squares R."/>
            <person name="Sulston J.E."/>
            <person name="Taylor K."/>
            <person name="Whitehead S."/>
            <person name="Barrell B.G."/>
        </authorList>
    </citation>
    <scope>NUCLEOTIDE SEQUENCE [LARGE SCALE GENOMIC DNA]</scope>
    <source>
        <strain>ATCC 25618 / H37Rv</strain>
    </source>
</reference>
<reference key="2">
    <citation type="journal article" date="2022" name="Genomics">
        <title>Deep N-terminomics of Mycobacterium tuberculosis H37Rv extensively correct annotated encoding genes.</title>
        <authorList>
            <person name="Shi J."/>
            <person name="Meng S."/>
            <person name="Wan L."/>
            <person name="Zhang Z."/>
            <person name="Jiang S."/>
            <person name="Zhu H."/>
            <person name="Dai E."/>
            <person name="Chang L."/>
            <person name="Gao H."/>
            <person name="Wan K."/>
            <person name="Zhang L."/>
            <person name="Zhao X."/>
            <person name="Liu H."/>
            <person name="Lyu Z."/>
            <person name="Zhang Y."/>
            <person name="Xu P."/>
        </authorList>
    </citation>
    <scope>PROTEIN SEQUENCE OF 2-29</scope>
    <source>
        <strain>H37Rv</strain>
    </source>
</reference>
<reference key="3">
    <citation type="journal article" date="2003" name="Mol. Microbiol.">
        <title>PknB kinase activity is regulated by phosphorylation in two Thr residues and dephosphorylation by PstP, the cognate phospho-Ser/Thr phosphatase, in Mycobacterium tuberculosis.</title>
        <authorList>
            <person name="Boitel B."/>
            <person name="Ortiz-Lombardia M."/>
            <person name="Duran R."/>
            <person name="Pompeo F."/>
            <person name="Cole S.T."/>
            <person name="Cervenansky C."/>
            <person name="Alzari P.M."/>
        </authorList>
    </citation>
    <scope>PROTEIN SEQUENCE OF 162-189</scope>
    <scope>CATALYTIC ACTIVITY</scope>
    <scope>PHOSPHORYLATION AT THR-171 AND THR-173</scope>
    <scope>MUTAGENESIS OF THR-171 AND THR-173</scope>
    <scope>IDENTIFICATION BY MASS SPECTROMETRY</scope>
    <source>
        <strain>ATCC 25618 / H37Rv</strain>
    </source>
</reference>
<reference key="4">
    <citation type="journal article" date="1999" name="Infect. Immun.">
        <title>Expression and characterization of the Mycobacterium tuberculosis serine/threonine protein kinase PknB.</title>
        <authorList>
            <person name="Av-Gay Y."/>
            <person name="Jamil S."/>
            <person name="Drews S.J."/>
        </authorList>
    </citation>
    <scope>CATALYTIC ACTIVITY</scope>
    <scope>AUTOPHOSPHORYLATION</scope>
    <source>
        <strain>ATCC 25618 / H37Rv</strain>
    </source>
</reference>
<reference key="5">
    <citation type="journal article" date="2005" name="Biochem. Biophys. Res. Commun.">
        <title>Conserved autophosphorylation pattern in activation loops and juxtamembrane regions of Mycobacterium tuberculosis Ser/Thr protein kinases.</title>
        <authorList>
            <person name="Duran R."/>
            <person name="Villarino A."/>
            <person name="Bellinzoni M."/>
            <person name="Wehenkel A."/>
            <person name="Fernandez P."/>
            <person name="Boitel B."/>
            <person name="Cole S.T."/>
            <person name="Alzari P.M."/>
            <person name="Cervenansky C."/>
        </authorList>
    </citation>
    <scope>PHOSPHORYLATION AT SER-166; THR-171; THR-173; THR-294 AND THR-309</scope>
    <scope>IDENTIFICATION BY MASS SPECTROMETRY</scope>
</reference>
<reference key="6">
    <citation type="journal article" date="2005" name="Genes Dev.">
        <title>The Mycobacterium tuberculosis serine/threonine kinases PknA and PknB: substrate identification and regulation of cell shape.</title>
        <authorList>
            <person name="Kang C.M."/>
            <person name="Abbott D.W."/>
            <person name="Park S.T."/>
            <person name="Dascher C.C."/>
            <person name="Cantley L.C."/>
            <person name="Husson R.N."/>
        </authorList>
    </citation>
    <scope>FUNCTION</scope>
    <scope>CATALYTIC ACTIVITY</scope>
    <scope>INDUCTION</scope>
    <scope>PHOSPHORYLATION AT THR-171 AND THR-173</scope>
    <scope>OVEREXPRESSION</scope>
    <scope>MUTAGENESIS OF LYS-40</scope>
    <source>
        <strain>ATCC 25618 / H37Rv</strain>
    </source>
</reference>
<reference key="7">
    <citation type="journal article" date="2005" name="J. Mol. Biol.">
        <title>Proteomic identification of M. tuberculosis protein kinase substrates: PknB recruits GarA, a FHA domain-containing protein, through activation loop-mediated interactions.</title>
        <authorList>
            <person name="Villarino A."/>
            <person name="Duran R."/>
            <person name="Wehenkel A."/>
            <person name="Fernandez P."/>
            <person name="England P."/>
            <person name="Brodin P."/>
            <person name="Cole S.T."/>
            <person name="Zimny-Arndt U."/>
            <person name="Jungblut P.R."/>
            <person name="Cervenansky C."/>
            <person name="Alzari P.M."/>
        </authorList>
    </citation>
    <scope>FUNCTION</scope>
    <scope>CATALYTIC ACTIVITY</scope>
    <scope>INTERACTION WITH GARA</scope>
    <scope>MUTAGENESIS OF THR-171 AND THR-173</scope>
    <source>
        <strain>ATCC 25618 / H37Rv</strain>
    </source>
</reference>
<reference key="8">
    <citation type="journal article" date="2005" name="Protein Sci.">
        <title>Mycobacterium tuberculosis serine/threonine kinases PknB, PknD, PknE, and PknF phosphorylate multiple FHA domains.</title>
        <authorList>
            <person name="Grundner C."/>
            <person name="Gay L.M."/>
            <person name="Alber T."/>
        </authorList>
    </citation>
    <scope>FUNCTION</scope>
    <scope>CATALYTIC ACTIVITY</scope>
</reference>
<reference key="9">
    <citation type="journal article" date="2006" name="FEBS J.">
        <title>EmbR, a regulatory protein with ATPase activity, is a substrate of multiple serine/threonine kinases and phosphatase in Mycobacterium tuberculosis.</title>
        <authorList>
            <person name="Sharma K."/>
            <person name="Gupta M."/>
            <person name="Krupa A."/>
            <person name="Srinivasan N."/>
            <person name="Singh Y."/>
        </authorList>
    </citation>
    <scope>FUNCTION AS A KINASE WITH EMBR AS SUBSTRATE</scope>
    <scope>DEPHOSPHORYLATION BY PSTP</scope>
</reference>
<reference key="10">
    <citation type="journal article" date="2006" name="J. Bacteriol.">
        <title>The Ser/Thr protein kinase PknB is essential for sustaining mycobacterial growth.</title>
        <authorList>
            <person name="Fernandez P."/>
            <person name="Saint-Joanis B."/>
            <person name="Barilone N."/>
            <person name="Jackson M."/>
            <person name="Gicquel B."/>
            <person name="Cole S.T."/>
            <person name="Alzari P.M."/>
        </authorList>
    </citation>
    <scope>FUNCTION</scope>
    <scope>DISRUPTION PHENOTYPE</scope>
    <source>
        <strain>ATCC 25618 / H37Rv</strain>
    </source>
</reference>
<reference key="11">
    <citation type="journal article" date="2006" name="Microbiology">
        <title>The serine/threonine kinase PknB of Mycobacterium tuberculosis phosphorylates PBPA, a penicillin-binding protein required for cell division.</title>
        <authorList>
            <person name="Dasgupta A."/>
            <person name="Datta P."/>
            <person name="Kundu M."/>
            <person name="Basu J."/>
        </authorList>
    </citation>
    <scope>RETRACTED PAPER</scope>
    <source>
        <strain>ATCC 25618 / H37Rv</strain>
    </source>
</reference>
<reference key="12">
    <citation type="journal article" date="2015" name="Microbiology">
        <authorList>
            <person name="Dasgupta A."/>
            <person name="Datta P."/>
            <person name="Kundu M."/>
            <person name="Basu J."/>
        </authorList>
    </citation>
    <scope>RETRACTION NOTICE OF PUBMED:16436437</scope>
</reference>
<reference key="13">
    <citation type="journal article" date="2009" name="J. Biol. Chem.">
        <title>Forkhead-associated domain-containing protein Rv0019c and polyketide-associated protein PapA5, from substrates of serine/threonine protein kinase PknB to interacting proteins of Mycobacterium tuberculosis.</title>
        <authorList>
            <person name="Gupta M."/>
            <person name="Sajid A."/>
            <person name="Arora G."/>
            <person name="Tandon V."/>
            <person name="Singh Y."/>
        </authorList>
    </citation>
    <scope>FUNCTION</scope>
    <scope>CATALYTIC ACTIVITY</scope>
    <scope>INTERACTION WITH FHAB</scope>
    <scope>MUTAGENESIS OF LYS-40; THR-171; THR-173; THR-294 AND THR-309</scope>
</reference>
<reference key="14">
    <citation type="journal article" date="2009" name="J. Mol. Biol.">
        <title>PknB-mediated phosphorylation of a novel substrate, N-acetylglucosamine-1-phosphate uridyltransferase, modulates its acetyltransferase activity.</title>
        <authorList>
            <person name="Parikh A."/>
            <person name="Verma S.K."/>
            <person name="Khan S."/>
            <person name="Prakash B."/>
            <person name="Nandicoori V.K."/>
        </authorList>
    </citation>
    <scope>FUNCTION AS A KINASE WITH GLMU AS SUBSTRATE</scope>
</reference>
<reference key="15">
    <citation type="journal article" date="2010" name="Mol. Microbiol.">
        <title>RseA, the SigE specific anti-sigma factor of Mycobacterium tuberculosis, is inactivated by phosphorylation-dependent ClpC1P2 proteolysis.</title>
        <authorList>
            <person name="Barik S."/>
            <person name="Sureka K."/>
            <person name="Mukherjee P."/>
            <person name="Basu J."/>
            <person name="Kundu M."/>
        </authorList>
    </citation>
    <scope>FUNCTION AS A KINASE WITH RSEA AS A SUBSTRATE</scope>
    <source>
        <strain>ATCC 25618 / H37Rv</strain>
    </source>
</reference>
<reference key="16">
    <citation type="journal article" date="2010" name="Structure">
        <title>Allosteric activation mechanism of the Mycobacterium tuberculosis receptor Ser/Thr protein kinase, PknB.</title>
        <authorList>
            <person name="Lombana T.N."/>
            <person name="Echols N."/>
            <person name="Good M.C."/>
            <person name="Thomsen N.D."/>
            <person name="Ng H.L."/>
            <person name="Greenstein A.E."/>
            <person name="Falick A.M."/>
            <person name="King D.S."/>
            <person name="Alber T."/>
        </authorList>
    </citation>
    <scope>ACTIVITY REGULATION</scope>
    <scope>SUBUNIT</scope>
    <scope>MUTAGENESIS OF ARG-10; LEU-33; ASP-76 AND ASP-138</scope>
    <source>
        <strain>ATCC 25618 / H37Rv</strain>
    </source>
</reference>
<reference key="17">
    <citation type="journal article" date="2011" name="Mol. Cell. Proteomics">
        <title>Proteogenomic analysis of Mycobacterium tuberculosis by high resolution mass spectrometry.</title>
        <authorList>
            <person name="Kelkar D.S."/>
            <person name="Kumar D."/>
            <person name="Kumar P."/>
            <person name="Balakrishnan L."/>
            <person name="Muthusamy B."/>
            <person name="Yadav A.K."/>
            <person name="Shrivastava P."/>
            <person name="Marimuthu A."/>
            <person name="Anand S."/>
            <person name="Sundaram H."/>
            <person name="Kingsbury R."/>
            <person name="Harsha H.C."/>
            <person name="Nair B."/>
            <person name="Prasad T.S."/>
            <person name="Chauhan D.S."/>
            <person name="Katoch K."/>
            <person name="Katoch V.M."/>
            <person name="Kumar P."/>
            <person name="Chaerkady R."/>
            <person name="Ramachandran S."/>
            <person name="Dash D."/>
            <person name="Pandey A."/>
        </authorList>
    </citation>
    <scope>ACETYLATION [LARGE SCALE ANALYSIS] AT THR-2</scope>
    <scope>CLEAVAGE OF INITIATOR METHIONINE [LARGE SCALE ANALYSIS]</scope>
    <scope>IDENTIFICATION BY MASS SPECTROMETRY [LARGE SCALE ANALYSIS]</scope>
    <source>
        <strain>ATCC 25618 / H37Rv</strain>
    </source>
</reference>
<reference key="18">
    <citation type="journal article" date="2011" name="PLoS ONE">
        <title>Phosphorylation of Mycobacterium tuberculosis Ser/Thr phosphatase by PknA and PknB.</title>
        <authorList>
            <person name="Sajid A."/>
            <person name="Arora G."/>
            <person name="Gupta M."/>
            <person name="Upadhyay S."/>
            <person name="Nandicoori V.K."/>
            <person name="Singh Y."/>
        </authorList>
    </citation>
    <scope>FUNCTION AS A KINASE WITH PSTP AS SUBSTRATE</scope>
    <source>
        <strain>ATCC 25618 / H37Rv</strain>
    </source>
</reference>
<reference key="19">
    <citation type="journal article" date="2011" name="PLoS Pathog.">
        <title>The extracytoplasmic domain of the Mycobacterium tuberculosis Ser/Thr kinase PknB binds specific muropeptides and is required for PknB localization.</title>
        <authorList>
            <person name="Mir M."/>
            <person name="Asong J."/>
            <person name="Li X."/>
            <person name="Cardot J."/>
            <person name="Boons G.J."/>
            <person name="Husson R.N."/>
        </authorList>
    </citation>
    <scope>ACTIVITY REGULATION</scope>
    <scope>SUBCELLULAR LOCATION</scope>
    <scope>DOMAIN</scope>
</reference>
<reference key="20">
    <citation type="journal article" date="2011" name="Structure">
        <title>Structural insight into the Mycobacterium tuberculosis Rv0020c protein and its interaction with the PknB kinase.</title>
        <authorList>
            <person name="Roumestand C."/>
            <person name="Leiba J."/>
            <person name="Galophe N."/>
            <person name="Margeat E."/>
            <person name="Padilla A."/>
            <person name="Bessin Y."/>
            <person name="Barthe P."/>
            <person name="Molle V."/>
            <person name="Cohen-Gonsaud M."/>
        </authorList>
    </citation>
    <scope>INTERACTION WITH FHAA</scope>
    <source>
        <strain>ATCC 25618 / H37Rv</strain>
    </source>
</reference>
<reference key="21">
    <citation type="journal article" date="2012" name="Sci. Signal.">
        <title>A phosphorylated pseudokinase complex controls cell wall synthesis in mycobacteria.</title>
        <authorList>
            <person name="Gee C.L."/>
            <person name="Papavinasasundaram K.G."/>
            <person name="Blair S.R."/>
            <person name="Baer C.E."/>
            <person name="Falick A.M."/>
            <person name="King D.S."/>
            <person name="Griffin J.E."/>
            <person name="Venghatakrishnan H."/>
            <person name="Zukauskas A."/>
            <person name="Wei J.R."/>
            <person name="Dhiman R.K."/>
            <person name="Crick D.C."/>
            <person name="Rubin E.J."/>
            <person name="Sassetti C.M."/>
            <person name="Alber T."/>
        </authorList>
    </citation>
    <scope>FUNCTION</scope>
</reference>
<reference key="22">
    <citation type="journal article" date="2014" name="J. Biol. Chem.">
        <title>Protein kinase B (PknB) of Mycobacterium tuberculosis is essential for growth of the pathogen in vitro as well as for survival within the host.</title>
        <authorList>
            <person name="Chawla Y."/>
            <person name="Upadhyay S."/>
            <person name="Khan S."/>
            <person name="Nagarajan S.N."/>
            <person name="Forti F."/>
            <person name="Nandicoori V.K."/>
        </authorList>
    </citation>
    <scope>FUNCTION</scope>
    <scope>DISRUPTION PHENOTYPE</scope>
    <scope>DOMAIN</scope>
    <source>
        <strain>H37Rv</strain>
    </source>
</reference>
<reference key="23">
    <citation type="journal article" date="2014" name="J. Microbiol.">
        <title>Phosphorylation regulates mycobacterial proteasome.</title>
        <authorList>
            <person name="Anandan T."/>
            <person name="Han J."/>
            <person name="Baun H."/>
            <person name="Nyayapathy S."/>
            <person name="Brown J.T."/>
            <person name="Dial R.L."/>
            <person name="Moltalvo J.A."/>
            <person name="Kim M.S."/>
            <person name="Yang S.H."/>
            <person name="Ronning D.R."/>
            <person name="Husson R.N."/>
            <person name="Suh J."/>
            <person name="Kang C.M."/>
        </authorList>
    </citation>
    <scope>FUNCTION</scope>
    <scope>IDENTIFICATION OF PRCA AS SUBSTRATE</scope>
    <source>
        <strain>H37Rv</strain>
    </source>
</reference>
<reference key="24">
    <citation type="journal article" date="2014" name="PLoS Biol.">
        <title>Mycobacterium tuberculosis Ser/Thr protein kinase B mediates an oxygen-dependent replication switch.</title>
        <authorList>
            <person name="Ortega C."/>
            <person name="Liao R."/>
            <person name="Anderson L.N."/>
            <person name="Rustad T."/>
            <person name="Ollodart A.R."/>
            <person name="Wright A.T."/>
            <person name="Sherman D.R."/>
            <person name="Grundner C."/>
        </authorList>
    </citation>
    <scope>FUNCTION</scope>
    <scope>INDUCTION</scope>
    <source>
        <strain>ATCC 27294 / TMC 102 / H37Rv</strain>
    </source>
</reference>
<reference key="25">
    <citation type="journal article" date="2021" name="Front. Microbiol.">
        <title>Mycobacterium tuberculosis thymidylyltransferase RmlA is negatively regulated by Ser/Thr protein kinase PknB.</title>
        <authorList>
            <person name="Qu D."/>
            <person name="Zhao X."/>
            <person name="Sun Y."/>
            <person name="Wu F.L."/>
            <person name="Tao S.C."/>
        </authorList>
    </citation>
    <scope>FUNCTION</scope>
    <scope>CATALYTIC ACTIVITY</scope>
</reference>
<reference key="26">
    <citation type="journal article" date="2003" name="J. Biol. Chem.">
        <title>Crystal structure of the catalytic domain of the PknB serine/threonine kinase from Mycobacterium tuberculosis.</title>
        <authorList>
            <person name="Ortiz-Lombardia M."/>
            <person name="Pompeo F."/>
            <person name="Boitel B."/>
            <person name="Alzari P.M."/>
        </authorList>
    </citation>
    <scope>X-RAY CRYSTALLOGRAPHY (2.2 ANGSTROMS) OF 1-279 IN COMPLEX WITH ATP</scope>
</reference>
<reference key="27">
    <citation type="journal article" date="2003" name="Nat. Struct. Biol.">
        <title>Structure of Mycobacterium tuberculosis PknB supports a universal activation mechanism for Ser/Thr protein kinases.</title>
        <authorList>
            <person name="Young T.A."/>
            <person name="Delagoutte B."/>
            <person name="Endrizzi J.A."/>
            <person name="Falick A.M."/>
            <person name="Alber T."/>
        </authorList>
    </citation>
    <scope>X-RAY CRYSTALLOGRAPHY (3.0 ANGSTROMS) OF 1-308 IN COMPLEX WITH ATP</scope>
    <scope>CATALYTIC ACTIVITY</scope>
    <scope>METAL BINDING AT ASN-143 AND ASP-156</scope>
    <scope>ATP BINDING AT LYS-40</scope>
    <scope>PHOSPHORYLATION AT SER-166; SER-169; THR-171; THR-173; THR-294 AND SER-295</scope>
    <scope>IDENTIFICATION BY MASS SPECTROMETRY</scope>
</reference>
<reference key="28">
    <citation type="journal article" date="2006" name="FEBS Lett.">
        <title>The structure of PknB in complex with mitoxantrone, an ATP-competitive inhibitor, suggests a mode of protein kinase regulation in mycobacteria.</title>
        <authorList>
            <person name="Wehenkel A."/>
            <person name="Fernandez P."/>
            <person name="Bellinzoni M."/>
            <person name="Catherinot V."/>
            <person name="Barilone N."/>
            <person name="Labesse G."/>
            <person name="Jackson M."/>
            <person name="Alzari P.M."/>
        </authorList>
    </citation>
    <scope>X-RAY CRYSTALLOGRAPHY (2.89 ANGSTROMS) OF 1-279 IN COMPLEX WITH MITOXANTRONE</scope>
    <scope>ACTIVITY REGULATION</scope>
    <scope>SUBUNIT</scope>
</reference>
<reference key="29">
    <citation type="journal article" date="2008" name="EMBO J.">
        <title>Auto-activation mechanism of the Mycobacterium tuberculosis PknB receptor Ser/Thr kinase.</title>
        <authorList>
            <person name="Mieczkowski C."/>
            <person name="Iavarone A.T."/>
            <person name="Alber T."/>
        </authorList>
    </citation>
    <scope>X-RAY CRYSTALLOGRAPHY (1.80 ANGSTROMS) OF 1-308 IN COMPLEX WITH ADP</scope>
    <scope>PHOSPHORYLATION AT THR-171</scope>
</reference>
<reference key="30">
    <citation type="journal article" date="2010" name="Structure">
        <title>The structure of PknB extracellular PASTA domain from mycobacterium tuberculosis suggests a ligand-dependent kinase activation.</title>
        <authorList>
            <person name="Barthe P."/>
            <person name="Mukamolova G.V."/>
            <person name="Roumestand C."/>
            <person name="Cohen-Gonsaud M."/>
        </authorList>
    </citation>
    <scope>STRUCTURE BY NMR OF 355-491</scope>
    <scope>ACTIVITY REGULATION</scope>
</reference>
<evidence type="ECO:0000255" key="1"/>
<evidence type="ECO:0000255" key="2">
    <source>
        <dbReference type="PROSITE-ProRule" id="PRU00159"/>
    </source>
</evidence>
<evidence type="ECO:0000255" key="3">
    <source>
        <dbReference type="PROSITE-ProRule" id="PRU00528"/>
    </source>
</evidence>
<evidence type="ECO:0000256" key="4">
    <source>
        <dbReference type="SAM" id="MobiDB-lite"/>
    </source>
</evidence>
<evidence type="ECO:0000269" key="5">
    <source>
    </source>
</evidence>
<evidence type="ECO:0000269" key="6">
    <source>
    </source>
</evidence>
<evidence type="ECO:0000269" key="7">
    <source>
    </source>
</evidence>
<evidence type="ECO:0000269" key="8">
    <source>
    </source>
</evidence>
<evidence type="ECO:0000269" key="9">
    <source>
    </source>
</evidence>
<evidence type="ECO:0000269" key="10">
    <source>
    </source>
</evidence>
<evidence type="ECO:0000269" key="11">
    <source>
    </source>
</evidence>
<evidence type="ECO:0000269" key="12">
    <source>
    </source>
</evidence>
<evidence type="ECO:0000269" key="13">
    <source>
    </source>
</evidence>
<evidence type="ECO:0000269" key="14">
    <source>
    </source>
</evidence>
<evidence type="ECO:0000269" key="15">
    <source>
    </source>
</evidence>
<evidence type="ECO:0000269" key="16">
    <source>
    </source>
</evidence>
<evidence type="ECO:0000269" key="17">
    <source>
    </source>
</evidence>
<evidence type="ECO:0000269" key="18">
    <source>
    </source>
</evidence>
<evidence type="ECO:0000269" key="19">
    <source>
    </source>
</evidence>
<evidence type="ECO:0000269" key="20">
    <source>
    </source>
</evidence>
<evidence type="ECO:0000269" key="21">
    <source>
    </source>
</evidence>
<evidence type="ECO:0000269" key="22">
    <source>
    </source>
</evidence>
<evidence type="ECO:0000269" key="23">
    <source>
    </source>
</evidence>
<evidence type="ECO:0000269" key="24">
    <source>
    </source>
</evidence>
<evidence type="ECO:0000269" key="25">
    <source>
    </source>
</evidence>
<evidence type="ECO:0000269" key="26">
    <source>
    </source>
</evidence>
<evidence type="ECO:0000269" key="27">
    <source>
    </source>
</evidence>
<evidence type="ECO:0000269" key="28">
    <source>
    </source>
</evidence>
<evidence type="ECO:0000269" key="29">
    <source>
    </source>
</evidence>
<evidence type="ECO:0000269" key="30">
    <source>
    </source>
</evidence>
<evidence type="ECO:0000305" key="31">
    <source>
    </source>
</evidence>
<evidence type="ECO:0000305" key="32">
    <source>
    </source>
</evidence>
<evidence type="ECO:0000305" key="33">
    <source>
    </source>
</evidence>
<evidence type="ECO:0007744" key="34">
    <source>
    </source>
</evidence>
<evidence type="ECO:0007829" key="35">
    <source>
        <dbReference type="PDB" id="2KUD"/>
    </source>
</evidence>
<evidence type="ECO:0007829" key="36">
    <source>
        <dbReference type="PDB" id="2KUF"/>
    </source>
</evidence>
<evidence type="ECO:0007829" key="37">
    <source>
        <dbReference type="PDB" id="2KUI"/>
    </source>
</evidence>
<evidence type="ECO:0007829" key="38">
    <source>
        <dbReference type="PDB" id="3F69"/>
    </source>
</evidence>
<evidence type="ECO:0007829" key="39">
    <source>
        <dbReference type="PDB" id="3ORK"/>
    </source>
</evidence>
<evidence type="ECO:0007829" key="40">
    <source>
        <dbReference type="PDB" id="3ORO"/>
    </source>
</evidence>
<evidence type="ECO:0007829" key="41">
    <source>
        <dbReference type="PDB" id="3ORP"/>
    </source>
</evidence>
<evidence type="ECO:0007829" key="42">
    <source>
        <dbReference type="PDB" id="5E0Z"/>
    </source>
</evidence>
<evidence type="ECO:0007829" key="43">
    <source>
        <dbReference type="PDB" id="5E10"/>
    </source>
</evidence>
<protein>
    <recommendedName>
        <fullName>Serine/threonine-protein kinase PknB</fullName>
        <ecNumber>2.7.11.1</ecNumber>
    </recommendedName>
</protein>
<comment type="function">
    <text evidence="10 11 12 14 15 17 18 19 22 25 26 27 28 29">Protein kinase that regulates many aspects of mycobacterial physiology, and is critical for growth in vitro and survival of the pathogen in the host (PubMed:24706757). Is a key component of a signal transduction pathway that regulates cell growth, cell shape and cell division via phosphorylation of target proteins such as GarA, GlmU, PapA5, FhaB (Rv0019c), FhaA (Rv0020c), MviN, PstP, EmbR, Rv1422, Rv1747, RseA and RmlA (PubMed:15978616, PubMed:15985609, PubMed:15987910, PubMed:16817899, PubMed:16980473, PubMed:19121323, PubMed:19826007, PubMed:20025669, PubMed:21423706, PubMed:22275220, PubMed:33868202). Also catalyzes the phosphorylation of the core proteasome alpha-subunit (PrcA), and thereby regulates the proteolytic activity of the proteasome (PubMed:25224505). Is a major regulator of the oxygen-dependent replication switch since PknB activity is necessary for reactivation of cells from the hypoxic state (PubMed:24409094). Shows a strong preference for Thr versus Ser as the phosphoacceptor. Overexpression of PknB alters cell morphology and leads to cell death (PubMed:24409094, PubMed:24706757).</text>
</comment>
<comment type="catalytic activity">
    <reaction evidence="5 6 8 10 11 12 18">
        <text>L-seryl-[protein] + ATP = O-phospho-L-seryl-[protein] + ADP + H(+)</text>
        <dbReference type="Rhea" id="RHEA:17989"/>
        <dbReference type="Rhea" id="RHEA-COMP:9863"/>
        <dbReference type="Rhea" id="RHEA-COMP:11604"/>
        <dbReference type="ChEBI" id="CHEBI:15378"/>
        <dbReference type="ChEBI" id="CHEBI:29999"/>
        <dbReference type="ChEBI" id="CHEBI:30616"/>
        <dbReference type="ChEBI" id="CHEBI:83421"/>
        <dbReference type="ChEBI" id="CHEBI:456216"/>
        <dbReference type="EC" id="2.7.11.1"/>
    </reaction>
</comment>
<comment type="catalytic activity">
    <reaction evidence="5 6 8 10 11 12 18 29">
        <text>L-threonyl-[protein] + ATP = O-phospho-L-threonyl-[protein] + ADP + H(+)</text>
        <dbReference type="Rhea" id="RHEA:46608"/>
        <dbReference type="Rhea" id="RHEA-COMP:11060"/>
        <dbReference type="Rhea" id="RHEA-COMP:11605"/>
        <dbReference type="ChEBI" id="CHEBI:15378"/>
        <dbReference type="ChEBI" id="CHEBI:30013"/>
        <dbReference type="ChEBI" id="CHEBI:30616"/>
        <dbReference type="ChEBI" id="CHEBI:61977"/>
        <dbReference type="ChEBI" id="CHEBI:456216"/>
        <dbReference type="EC" id="2.7.11.1"/>
    </reaction>
</comment>
<comment type="activity regulation">
    <text evidence="13 20 21 23">Interaction of the PASTA domains with peptidoglycan leads to septal and polar localization of PknB, and dimerization of the intracellular kinase domain. Dimerization activates the kinase domain via an allosteric mechanism, triggering autophosphorylation and phosphorylation of target proteins. Inhibited by mitoxantrone. Inhibition prevents mycobacterial growth.</text>
</comment>
<comment type="subunit">
    <text evidence="6 7 10 13 16 18 21 24">Homodimer. Interacts with the FHA domain of GarA, FhaB and FhaA.</text>
</comment>
<comment type="interaction">
    <interactant intactId="EBI-2946037">
        <id>P9WI81</id>
    </interactant>
    <interactant intactId="EBI-15896562">
        <id>P71590</id>
        <label>fhaA</label>
    </interactant>
    <organismsDiffer>false</organismsDiffer>
    <experiments>4</experiments>
</comment>
<comment type="interaction">
    <interactant intactId="EBI-2946037">
        <id>P9WI81</id>
    </interactant>
    <interactant intactId="EBI-6405522">
        <id>P9WJA9</id>
        <label>garA</label>
    </interactant>
    <organismsDiffer>false</organismsDiffer>
    <experiments>2</experiments>
</comment>
<comment type="interaction">
    <interactant intactId="EBI-2946037">
        <id>P9WI81</id>
    </interactant>
    <interactant intactId="EBI-2946037">
        <id>P9WI81</id>
        <label>pknB</label>
    </interactant>
    <organismsDiffer>false</organismsDiffer>
    <experiments>12</experiments>
</comment>
<comment type="subcellular location">
    <subcellularLocation>
        <location evidence="23">Cell membrane</location>
        <topology evidence="23">Single-pass membrane protein</topology>
    </subcellularLocation>
    <text evidence="23 27">Localizes to septum and cell poles (PubMed:21829358). The localization of PknB to the cell membrane is essential for cell survival (PubMed:24706757).</text>
</comment>
<comment type="induction">
    <text evidence="11 26">Expressed predominantly in exponential phase (PubMed:15985609). PknB levels are regulated in response to hypoxia; its expression is down-regulated during hypoxia and recovers to aerated levels upon reaeration (at mRNA and protein level) (PubMed:24409094).</text>
</comment>
<comment type="domain">
    <text evidence="23 27">The intracellular kinase domain and all four extracytoplasmic PASTA domains are essential for PknB function and cell survival (PubMed:24706757). The PASTA domains interact with peptidoglycans and are required for PknB localization (PubMed:21829358).</text>
</comment>
<comment type="PTM">
    <text evidence="6 8 9 11 16">Autophosphorylated. Dephosphorylated by PstP.</text>
</comment>
<comment type="disruption phenotype">
    <text evidence="15 27">Essential for growth, it cannot be disrupted (PubMed:16980473). PknB depletion in M.tuberculosis results in cell death and aberrant cell morphology, and leads to complete clearance of the pathogen from the host tissues using the murine infection model (PubMed:24706757).</text>
</comment>
<comment type="miscellaneous">
    <text evidence="31">Overexpression causes major growth and morphological changes that indicate defects in cell wall synthesis and possibly in cell division.</text>
</comment>
<comment type="similarity">
    <text evidence="2">Belongs to the protein kinase superfamily. Ser/Thr protein kinase family.</text>
</comment>
<comment type="caution">
    <text evidence="32 33">An article reported the role of PknB in phosphorylation of PbpA, but this paper was later retracted as some figures were modified prior to publication.</text>
</comment>
<feature type="initiator methionine" description="Removed" evidence="30 34">
    <location>
        <position position="1"/>
    </location>
</feature>
<feature type="chain" id="PRO_0000171208" description="Serine/threonine-protein kinase PknB">
    <location>
        <begin position="2"/>
        <end position="626"/>
    </location>
</feature>
<feature type="topological domain" description="Cytoplasmic" evidence="1">
    <location>
        <begin position="2"/>
        <end position="332"/>
    </location>
</feature>
<feature type="transmembrane region" description="Helical" evidence="1">
    <location>
        <begin position="333"/>
        <end position="353"/>
    </location>
</feature>
<feature type="topological domain" description="Extracellular" evidence="1">
    <location>
        <begin position="354"/>
        <end position="626"/>
    </location>
</feature>
<feature type="domain" description="Protein kinase" evidence="2">
    <location>
        <begin position="11"/>
        <end position="274"/>
    </location>
</feature>
<feature type="domain" description="PASTA 1" evidence="3">
    <location>
        <begin position="356"/>
        <end position="422"/>
    </location>
</feature>
<feature type="domain" description="PASTA 2" evidence="3">
    <location>
        <begin position="423"/>
        <end position="490"/>
    </location>
</feature>
<feature type="domain" description="PASTA 3" evidence="3">
    <location>
        <begin position="491"/>
        <end position="557"/>
    </location>
</feature>
<feature type="domain" description="PASTA 4" evidence="3">
    <location>
        <begin position="558"/>
        <end position="626"/>
    </location>
</feature>
<feature type="region of interest" description="Disordered" evidence="4">
    <location>
        <begin position="299"/>
        <end position="323"/>
    </location>
</feature>
<feature type="compositionally biased region" description="Basic and acidic residues" evidence="4">
    <location>
        <begin position="311"/>
        <end position="323"/>
    </location>
</feature>
<feature type="active site" description="Proton acceptor">
    <location>
        <position position="138"/>
    </location>
</feature>
<feature type="binding site" evidence="2 6 7">
    <location>
        <begin position="17"/>
        <end position="25"/>
    </location>
    <ligand>
        <name>ATP</name>
        <dbReference type="ChEBI" id="CHEBI:30616"/>
    </ligand>
</feature>
<feature type="binding site" evidence="2 6 7">
    <location>
        <position position="40"/>
    </location>
    <ligand>
        <name>ATP</name>
        <dbReference type="ChEBI" id="CHEBI:30616"/>
    </ligand>
</feature>
<feature type="binding site" evidence="2 6 7">
    <location>
        <begin position="93"/>
        <end position="95"/>
    </location>
    <ligand>
        <name>ATP</name>
        <dbReference type="ChEBI" id="CHEBI:30616"/>
    </ligand>
</feature>
<feature type="binding site" evidence="2 6 7">
    <location>
        <begin position="140"/>
        <end position="143"/>
    </location>
    <ligand>
        <name>ATP</name>
        <dbReference type="ChEBI" id="CHEBI:30616"/>
    </ligand>
</feature>
<feature type="binding site">
    <location>
        <position position="143"/>
    </location>
    <ligand>
        <name>Mg(2+)</name>
        <dbReference type="ChEBI" id="CHEBI:18420"/>
    </ligand>
</feature>
<feature type="binding site" evidence="2 6 7">
    <location>
        <position position="156"/>
    </location>
    <ligand>
        <name>ATP</name>
        <dbReference type="ChEBI" id="CHEBI:30616"/>
    </ligand>
</feature>
<feature type="binding site">
    <location>
        <position position="156"/>
    </location>
    <ligand>
        <name>Mg(2+)</name>
        <dbReference type="ChEBI" id="CHEBI:18420"/>
    </ligand>
</feature>
<feature type="modified residue" description="N-acetylthreonine" evidence="34">
    <location>
        <position position="2"/>
    </location>
</feature>
<feature type="modified residue" description="Phosphoserine; by autocatalysis" evidence="6 9">
    <location>
        <position position="166"/>
    </location>
</feature>
<feature type="modified residue" description="Phosphoserine; by autocatalysis" evidence="6">
    <location>
        <position position="169"/>
    </location>
</feature>
<feature type="modified residue" description="Phosphothreonine; by autocatalysis" evidence="6 8 9 11 16">
    <location>
        <position position="171"/>
    </location>
</feature>
<feature type="modified residue" description="Phosphothreonine; by autocatalysis" evidence="6 8 9 11">
    <location>
        <position position="173"/>
    </location>
</feature>
<feature type="modified residue" description="Phosphothreonine; by autocatalysis" evidence="6 9">
    <location>
        <position position="294"/>
    </location>
</feature>
<feature type="modified residue" description="Phosphoserine; by autocatalysis" evidence="6">
    <location>
        <position position="295"/>
    </location>
</feature>
<feature type="modified residue" description="Phosphothreonine; by autocatalysis" evidence="9">
    <location>
        <position position="309"/>
    </location>
</feature>
<feature type="mutagenesis site" description="Impairs kinase activity." evidence="21">
    <original>R</original>
    <variation>A</variation>
    <location>
        <position position="10"/>
    </location>
</feature>
<feature type="mutagenesis site" description="Impairs kinase activity." evidence="21">
    <original>L</original>
    <variation>D</variation>
    <location>
        <position position="33"/>
    </location>
</feature>
<feature type="mutagenesis site" description="Lack of autophosphorylation. Decreases affinity for FhaB." evidence="11 18">
    <original>K</original>
    <variation>M</variation>
    <location>
        <position position="40"/>
    </location>
</feature>
<feature type="mutagenesis site" description="Impairs kinase activity." evidence="21">
    <original>D</original>
    <variation>A</variation>
    <location>
        <position position="76"/>
    </location>
</feature>
<feature type="mutagenesis site" description="Impairs kinase activity." evidence="21">
    <original>D</original>
    <variation>N</variation>
    <location>
        <position position="138"/>
    </location>
</feature>
<feature type="mutagenesis site" description="Reduces activity and autophosphorylation. Decreases interaction with GarA." evidence="8 10 18">
    <original>T</original>
    <variation>A</variation>
    <location>
        <position position="171"/>
    </location>
</feature>
<feature type="mutagenesis site" description="Reduces activity and autophosphorylation. Decreases interaction with GarA." evidence="8 10 18">
    <original>T</original>
    <variation>A</variation>
    <location>
        <position position="173"/>
    </location>
</feature>
<feature type="mutagenesis site" description="Does not affect activity." evidence="18">
    <original>T</original>
    <variation>A</variation>
    <location>
        <position position="294"/>
    </location>
</feature>
<feature type="mutagenesis site" description="Does not affect activity." evidence="18">
    <original>T</original>
    <variation>A</variation>
    <location>
        <position position="309"/>
    </location>
</feature>
<feature type="strand" evidence="39">
    <location>
        <begin position="5"/>
        <end position="7"/>
    </location>
</feature>
<feature type="turn" evidence="39">
    <location>
        <begin position="8"/>
        <end position="10"/>
    </location>
</feature>
<feature type="strand" evidence="39">
    <location>
        <begin position="11"/>
        <end position="19"/>
    </location>
</feature>
<feature type="strand" evidence="39">
    <location>
        <begin position="21"/>
        <end position="30"/>
    </location>
</feature>
<feature type="turn" evidence="39">
    <location>
        <begin position="31"/>
        <end position="34"/>
    </location>
</feature>
<feature type="strand" evidence="39">
    <location>
        <begin position="35"/>
        <end position="42"/>
    </location>
</feature>
<feature type="turn" evidence="39">
    <location>
        <begin position="44"/>
        <end position="48"/>
    </location>
</feature>
<feature type="helix" evidence="39">
    <location>
        <begin position="50"/>
        <end position="60"/>
    </location>
</feature>
<feature type="strand" evidence="39">
    <location>
        <begin position="74"/>
        <end position="82"/>
    </location>
</feature>
<feature type="strand" evidence="39">
    <location>
        <begin position="85"/>
        <end position="93"/>
    </location>
</feature>
<feature type="strand" evidence="39">
    <location>
        <begin position="97"/>
        <end position="99"/>
    </location>
</feature>
<feature type="helix" evidence="39">
    <location>
        <begin position="100"/>
        <end position="107"/>
    </location>
</feature>
<feature type="helix" evidence="39">
    <location>
        <begin position="112"/>
        <end position="131"/>
    </location>
</feature>
<feature type="helix" evidence="39">
    <location>
        <begin position="141"/>
        <end position="143"/>
    </location>
</feature>
<feature type="strand" evidence="39">
    <location>
        <begin position="144"/>
        <end position="147"/>
    </location>
</feature>
<feature type="strand" evidence="39">
    <location>
        <begin position="152"/>
        <end position="154"/>
    </location>
</feature>
<feature type="strand" evidence="38">
    <location>
        <begin position="167"/>
        <end position="169"/>
    </location>
</feature>
<feature type="strand" evidence="40">
    <location>
        <begin position="176"/>
        <end position="179"/>
    </location>
</feature>
<feature type="helix" evidence="41">
    <location>
        <begin position="180"/>
        <end position="182"/>
    </location>
</feature>
<feature type="helix" evidence="39">
    <location>
        <begin position="185"/>
        <end position="189"/>
    </location>
</feature>
<feature type="helix" evidence="39">
    <location>
        <begin position="195"/>
        <end position="211"/>
    </location>
</feature>
<feature type="helix" evidence="39">
    <location>
        <begin position="221"/>
        <end position="230"/>
    </location>
</feature>
<feature type="helix" evidence="39">
    <location>
        <begin position="236"/>
        <end position="239"/>
    </location>
</feature>
<feature type="strand" evidence="41">
    <location>
        <begin position="240"/>
        <end position="242"/>
    </location>
</feature>
<feature type="helix" evidence="39">
    <location>
        <begin position="245"/>
        <end position="254"/>
    </location>
</feature>
<feature type="helix" evidence="39">
    <location>
        <begin position="259"/>
        <end position="261"/>
    </location>
</feature>
<feature type="helix" evidence="39">
    <location>
        <begin position="266"/>
        <end position="277"/>
    </location>
</feature>
<feature type="strand" evidence="37">
    <location>
        <begin position="358"/>
        <end position="361"/>
    </location>
</feature>
<feature type="helix" evidence="43">
    <location>
        <begin position="370"/>
        <end position="379"/>
    </location>
</feature>
<feature type="strand" evidence="43">
    <location>
        <begin position="383"/>
        <end position="389"/>
    </location>
</feature>
<feature type="strand" evidence="43">
    <location>
        <begin position="392"/>
        <end position="394"/>
    </location>
</feature>
<feature type="strand" evidence="43">
    <location>
        <begin position="398"/>
        <end position="404"/>
    </location>
</feature>
<feature type="strand" evidence="37">
    <location>
        <begin position="408"/>
        <end position="410"/>
    </location>
</feature>
<feature type="strand" evidence="43">
    <location>
        <begin position="415"/>
        <end position="421"/>
    </location>
</feature>
<feature type="strand" evidence="43">
    <location>
        <begin position="426"/>
        <end position="428"/>
    </location>
</feature>
<feature type="helix" evidence="35">
    <location>
        <begin position="433"/>
        <end position="435"/>
    </location>
</feature>
<feature type="helix" evidence="43">
    <location>
        <begin position="437"/>
        <end position="446"/>
    </location>
</feature>
<feature type="strand" evidence="43">
    <location>
        <begin position="452"/>
        <end position="458"/>
    </location>
</feature>
<feature type="helix" evidence="43">
    <location>
        <begin position="461"/>
        <end position="463"/>
    </location>
</feature>
<feature type="strand" evidence="43">
    <location>
        <begin position="466"/>
        <end position="472"/>
    </location>
</feature>
<feature type="strand" evidence="43">
    <location>
        <begin position="477"/>
        <end position="479"/>
    </location>
</feature>
<feature type="strand" evidence="43">
    <location>
        <begin position="484"/>
        <end position="490"/>
    </location>
</feature>
<feature type="strand" evidence="42">
    <location>
        <begin position="494"/>
        <end position="496"/>
    </location>
</feature>
<feature type="strand" evidence="36">
    <location>
        <begin position="502"/>
        <end position="504"/>
    </location>
</feature>
<feature type="helix" evidence="42">
    <location>
        <begin position="505"/>
        <end position="515"/>
    </location>
</feature>
<feature type="strand" evidence="42">
    <location>
        <begin position="520"/>
        <end position="525"/>
    </location>
</feature>
<feature type="strand" evidence="42">
    <location>
        <begin position="533"/>
        <end position="539"/>
    </location>
</feature>
<feature type="strand" evidence="42">
    <location>
        <begin position="544"/>
        <end position="546"/>
    </location>
</feature>
<feature type="strand" evidence="42">
    <location>
        <begin position="551"/>
        <end position="556"/>
    </location>
</feature>
<feature type="strand" evidence="42">
    <location>
        <begin position="560"/>
        <end position="562"/>
    </location>
</feature>
<feature type="helix" evidence="42">
    <location>
        <begin position="571"/>
        <end position="579"/>
    </location>
</feature>
<feature type="turn" evidence="42">
    <location>
        <begin position="580"/>
        <end position="582"/>
    </location>
</feature>
<feature type="strand" evidence="42">
    <location>
        <begin position="587"/>
        <end position="589"/>
    </location>
</feature>
<feature type="helix" evidence="42">
    <location>
        <begin position="597"/>
        <end position="599"/>
    </location>
</feature>
<feature type="strand" evidence="42">
    <location>
        <begin position="602"/>
        <end position="608"/>
    </location>
</feature>
<feature type="strand" evidence="42">
    <location>
        <begin position="613"/>
        <end position="615"/>
    </location>
</feature>
<feature type="strand" evidence="42">
    <location>
        <begin position="620"/>
        <end position="625"/>
    </location>
</feature>
<sequence>MTTPSHLSDRYELGEILGFGGMSEVHLARDLRLHRDVAVKVLRADLARDPSFYLRFRREAQNAAALNHPAIVAVYDTGEAETPAGPLPYIVMEYVDGVTLRDIVHTEGPMTPKRAIEVIADACQALNFSHQNGIIHRDVKPANIMISATNAVKVMDFGIARAIADSGNSVTQTAAVIGTAQYLSPEQARGDSVDARSDVYSLGCVLYEVLTGEPPFTGDSPVSVAYQHVREDPIPPSARHEGLSADLDAVVLKALAKNPENRYQTAAEMRADLVRVHNGEPPEAPKVLTDAERTSLLSSAAGNLSGPRTDPLPRQDLDDTDRDRSIGSVGRWVAVVAVLAVLTVVVTIAINTFGGITRDVQVPDVRGQSSADAIATLQNRGFKIRTLQKPDSTIPPDHVIGTDPAANTSVSAGDEITVNVSTGPEQREIPDVSTLTYAEAVKKLTAAGFGRFKQANSPSTPELVGKVIGTNPPANQTSAITNVVIIIVGSGPATKDIPDVAGQTVDVAQKNLNVYGFTKFSQASVDSPRPAGEVTGTNPPAGTTVPVDSVIELQVSKGNQFVMPDLSGMFWVDAEPRLRALGWTGMLDKGADVDAGGSQHNRVVYQNPPAGTGVNRDGIITLRFGQ</sequence>
<keyword id="KW-0002">3D-structure</keyword>
<keyword id="KW-0007">Acetylation</keyword>
<keyword id="KW-0067">ATP-binding</keyword>
<keyword id="KW-1003">Cell membrane</keyword>
<keyword id="KW-0903">Direct protein sequencing</keyword>
<keyword id="KW-0418">Kinase</keyword>
<keyword id="KW-0460">Magnesium</keyword>
<keyword id="KW-0472">Membrane</keyword>
<keyword id="KW-0479">Metal-binding</keyword>
<keyword id="KW-0547">Nucleotide-binding</keyword>
<keyword id="KW-0597">Phosphoprotein</keyword>
<keyword id="KW-1185">Reference proteome</keyword>
<keyword id="KW-0677">Repeat</keyword>
<keyword id="KW-0723">Serine/threonine-protein kinase</keyword>
<keyword id="KW-0808">Transferase</keyword>
<keyword id="KW-0812">Transmembrane</keyword>
<keyword id="KW-1133">Transmembrane helix</keyword>
<keyword id="KW-0843">Virulence</keyword>
<name>PKNB_MYCTU</name>
<proteinExistence type="evidence at protein level"/>